<reference key="1">
    <citation type="journal article" date="2008" name="PLoS ONE">
        <title>Genome sequence of Brucella abortus vaccine strain S19 compared to virulent strains yields candidate virulence genes.</title>
        <authorList>
            <person name="Crasta O.R."/>
            <person name="Folkerts O."/>
            <person name="Fei Z."/>
            <person name="Mane S.P."/>
            <person name="Evans C."/>
            <person name="Martino-Catt S."/>
            <person name="Bricker B."/>
            <person name="Yu G."/>
            <person name="Du L."/>
            <person name="Sobral B.W."/>
        </authorList>
    </citation>
    <scope>NUCLEOTIDE SEQUENCE [LARGE SCALE GENOMIC DNA]</scope>
    <source>
        <strain>S19</strain>
    </source>
</reference>
<name>AROC_BRUA1</name>
<proteinExistence type="inferred from homology"/>
<feature type="chain" id="PRO_1000115331" description="Chorismate synthase">
    <location>
        <begin position="1"/>
        <end position="364"/>
    </location>
</feature>
<feature type="binding site" evidence="1">
    <location>
        <position position="48"/>
    </location>
    <ligand>
        <name>NADP(+)</name>
        <dbReference type="ChEBI" id="CHEBI:58349"/>
    </ligand>
</feature>
<feature type="binding site" evidence="1">
    <location>
        <begin position="131"/>
        <end position="133"/>
    </location>
    <ligand>
        <name>FMN</name>
        <dbReference type="ChEBI" id="CHEBI:58210"/>
    </ligand>
</feature>
<feature type="binding site" evidence="1">
    <location>
        <begin position="243"/>
        <end position="244"/>
    </location>
    <ligand>
        <name>FMN</name>
        <dbReference type="ChEBI" id="CHEBI:58210"/>
    </ligand>
</feature>
<feature type="binding site" evidence="1">
    <location>
        <position position="288"/>
    </location>
    <ligand>
        <name>FMN</name>
        <dbReference type="ChEBI" id="CHEBI:58210"/>
    </ligand>
</feature>
<feature type="binding site" evidence="1">
    <location>
        <begin position="303"/>
        <end position="307"/>
    </location>
    <ligand>
        <name>FMN</name>
        <dbReference type="ChEBI" id="CHEBI:58210"/>
    </ligand>
</feature>
<feature type="binding site" evidence="1">
    <location>
        <position position="329"/>
    </location>
    <ligand>
        <name>FMN</name>
        <dbReference type="ChEBI" id="CHEBI:58210"/>
    </ligand>
</feature>
<evidence type="ECO:0000255" key="1">
    <source>
        <dbReference type="HAMAP-Rule" id="MF_00300"/>
    </source>
</evidence>
<keyword id="KW-0028">Amino-acid biosynthesis</keyword>
<keyword id="KW-0057">Aromatic amino acid biosynthesis</keyword>
<keyword id="KW-0274">FAD</keyword>
<keyword id="KW-0285">Flavoprotein</keyword>
<keyword id="KW-0288">FMN</keyword>
<keyword id="KW-0456">Lyase</keyword>
<keyword id="KW-0521">NADP</keyword>
<sequence length="364" mass="38988">MSHNSFGHLFRVTTWGESHGLALGCVVDGCPPGITFTEAEIQSFLDKRKPGQSKYTTQRREPDQVRVLSGVLLGEDGVTMTTTGTPISMMIENTDQRSKDYGEIARQYRPGHADYAYDVKYGIRDYRGGGRSSARETAARVAAGAIARKVVPGLEVRGALVSIGAHDIDRSRWNWAEVDNNPFFTPDAGSVEVFADYLDGIRKNGSSVGAIIEIVAEGVPAGIGAPIYGKLDQDIASYLMSINAVKGVEIGNGFEAARLTGEENADEMRMGNDGKPIFLSNHAGGVLGGIATGAPVVARFAVKPTSSILTPRRSIDKDGNEVDVMTRGRHDPCVGIRAVPIGEAMVACAIADHYLRHRGQTGRV</sequence>
<comment type="function">
    <text evidence="1">Catalyzes the anti-1,4-elimination of the C-3 phosphate and the C-6 proR hydrogen from 5-enolpyruvylshikimate-3-phosphate (EPSP) to yield chorismate, which is the branch point compound that serves as the starting substrate for the three terminal pathways of aromatic amino acid biosynthesis. This reaction introduces a second double bond into the aromatic ring system.</text>
</comment>
<comment type="catalytic activity">
    <reaction evidence="1">
        <text>5-O-(1-carboxyvinyl)-3-phosphoshikimate = chorismate + phosphate</text>
        <dbReference type="Rhea" id="RHEA:21020"/>
        <dbReference type="ChEBI" id="CHEBI:29748"/>
        <dbReference type="ChEBI" id="CHEBI:43474"/>
        <dbReference type="ChEBI" id="CHEBI:57701"/>
        <dbReference type="EC" id="4.2.3.5"/>
    </reaction>
</comment>
<comment type="cofactor">
    <cofactor evidence="1">
        <name>FMNH2</name>
        <dbReference type="ChEBI" id="CHEBI:57618"/>
    </cofactor>
    <text evidence="1">Reduced FMN (FMNH(2)).</text>
</comment>
<comment type="pathway">
    <text evidence="1">Metabolic intermediate biosynthesis; chorismate biosynthesis; chorismate from D-erythrose 4-phosphate and phosphoenolpyruvate: step 7/7.</text>
</comment>
<comment type="subunit">
    <text evidence="1">Homotetramer.</text>
</comment>
<comment type="similarity">
    <text evidence="1">Belongs to the chorismate synthase family.</text>
</comment>
<dbReference type="EC" id="4.2.3.5" evidence="1"/>
<dbReference type="EMBL" id="CP000887">
    <property type="protein sequence ID" value="ACD71958.1"/>
    <property type="molecule type" value="Genomic_DNA"/>
</dbReference>
<dbReference type="RefSeq" id="WP_002963585.1">
    <property type="nucleotide sequence ID" value="NC_010742.1"/>
</dbReference>
<dbReference type="SMR" id="B2S9R7"/>
<dbReference type="GeneID" id="97534201"/>
<dbReference type="KEGG" id="bmc:BAbS19_I04190"/>
<dbReference type="HOGENOM" id="CLU_034547_0_0_5"/>
<dbReference type="UniPathway" id="UPA00053">
    <property type="reaction ID" value="UER00090"/>
</dbReference>
<dbReference type="Proteomes" id="UP000002565">
    <property type="component" value="Chromosome 1"/>
</dbReference>
<dbReference type="GO" id="GO:0005829">
    <property type="term" value="C:cytosol"/>
    <property type="evidence" value="ECO:0007669"/>
    <property type="project" value="TreeGrafter"/>
</dbReference>
<dbReference type="GO" id="GO:0004107">
    <property type="term" value="F:chorismate synthase activity"/>
    <property type="evidence" value="ECO:0007669"/>
    <property type="project" value="UniProtKB-UniRule"/>
</dbReference>
<dbReference type="GO" id="GO:0010181">
    <property type="term" value="F:FMN binding"/>
    <property type="evidence" value="ECO:0007669"/>
    <property type="project" value="TreeGrafter"/>
</dbReference>
<dbReference type="GO" id="GO:0008652">
    <property type="term" value="P:amino acid biosynthetic process"/>
    <property type="evidence" value="ECO:0007669"/>
    <property type="project" value="UniProtKB-KW"/>
</dbReference>
<dbReference type="GO" id="GO:0009073">
    <property type="term" value="P:aromatic amino acid family biosynthetic process"/>
    <property type="evidence" value="ECO:0007669"/>
    <property type="project" value="UniProtKB-KW"/>
</dbReference>
<dbReference type="GO" id="GO:0009423">
    <property type="term" value="P:chorismate biosynthetic process"/>
    <property type="evidence" value="ECO:0007669"/>
    <property type="project" value="UniProtKB-UniRule"/>
</dbReference>
<dbReference type="CDD" id="cd07304">
    <property type="entry name" value="Chorismate_synthase"/>
    <property type="match status" value="1"/>
</dbReference>
<dbReference type="Gene3D" id="3.60.150.10">
    <property type="entry name" value="Chorismate synthase AroC"/>
    <property type="match status" value="1"/>
</dbReference>
<dbReference type="HAMAP" id="MF_00300">
    <property type="entry name" value="Chorismate_synth"/>
    <property type="match status" value="1"/>
</dbReference>
<dbReference type="InterPro" id="IPR000453">
    <property type="entry name" value="Chorismate_synth"/>
</dbReference>
<dbReference type="InterPro" id="IPR035904">
    <property type="entry name" value="Chorismate_synth_AroC_sf"/>
</dbReference>
<dbReference type="InterPro" id="IPR020541">
    <property type="entry name" value="Chorismate_synthase_CS"/>
</dbReference>
<dbReference type="NCBIfam" id="TIGR00033">
    <property type="entry name" value="aroC"/>
    <property type="match status" value="1"/>
</dbReference>
<dbReference type="NCBIfam" id="NF003793">
    <property type="entry name" value="PRK05382.1"/>
    <property type="match status" value="1"/>
</dbReference>
<dbReference type="PANTHER" id="PTHR21085">
    <property type="entry name" value="CHORISMATE SYNTHASE"/>
    <property type="match status" value="1"/>
</dbReference>
<dbReference type="PANTHER" id="PTHR21085:SF0">
    <property type="entry name" value="CHORISMATE SYNTHASE"/>
    <property type="match status" value="1"/>
</dbReference>
<dbReference type="Pfam" id="PF01264">
    <property type="entry name" value="Chorismate_synt"/>
    <property type="match status" value="1"/>
</dbReference>
<dbReference type="PIRSF" id="PIRSF001456">
    <property type="entry name" value="Chorismate_synth"/>
    <property type="match status" value="1"/>
</dbReference>
<dbReference type="SUPFAM" id="SSF103263">
    <property type="entry name" value="Chorismate synthase, AroC"/>
    <property type="match status" value="1"/>
</dbReference>
<dbReference type="PROSITE" id="PS00787">
    <property type="entry name" value="CHORISMATE_SYNTHASE_1"/>
    <property type="match status" value="1"/>
</dbReference>
<dbReference type="PROSITE" id="PS00788">
    <property type="entry name" value="CHORISMATE_SYNTHASE_2"/>
    <property type="match status" value="1"/>
</dbReference>
<dbReference type="PROSITE" id="PS00789">
    <property type="entry name" value="CHORISMATE_SYNTHASE_3"/>
    <property type="match status" value="1"/>
</dbReference>
<protein>
    <recommendedName>
        <fullName evidence="1">Chorismate synthase</fullName>
        <shortName evidence="1">CS</shortName>
        <ecNumber evidence="1">4.2.3.5</ecNumber>
    </recommendedName>
    <alternativeName>
        <fullName evidence="1">5-enolpyruvylshikimate-3-phosphate phospholyase</fullName>
    </alternativeName>
</protein>
<organism>
    <name type="scientific">Brucella abortus (strain S19)</name>
    <dbReference type="NCBI Taxonomy" id="430066"/>
    <lineage>
        <taxon>Bacteria</taxon>
        <taxon>Pseudomonadati</taxon>
        <taxon>Pseudomonadota</taxon>
        <taxon>Alphaproteobacteria</taxon>
        <taxon>Hyphomicrobiales</taxon>
        <taxon>Brucellaceae</taxon>
        <taxon>Brucella/Ochrobactrum group</taxon>
        <taxon>Brucella</taxon>
    </lineage>
</organism>
<gene>
    <name evidence="1" type="primary">aroC</name>
    <name type="ordered locus">BAbS19_I04190</name>
</gene>
<accession>B2S9R7</accession>